<gene>
    <name evidence="1" type="primary">trpS</name>
    <name type="ordered locus">UU175</name>
</gene>
<protein>
    <recommendedName>
        <fullName evidence="1">Tryptophan--tRNA ligase</fullName>
        <ecNumber evidence="1">6.1.1.2</ecNumber>
    </recommendedName>
    <alternativeName>
        <fullName evidence="1">Tryptophanyl-tRNA synthetase</fullName>
        <shortName evidence="1">TrpRS</shortName>
    </alternativeName>
</protein>
<proteinExistence type="inferred from homology"/>
<keyword id="KW-0030">Aminoacyl-tRNA synthetase</keyword>
<keyword id="KW-0067">ATP-binding</keyword>
<keyword id="KW-0963">Cytoplasm</keyword>
<keyword id="KW-0436">Ligase</keyword>
<keyword id="KW-0547">Nucleotide-binding</keyword>
<keyword id="KW-0648">Protein biosynthesis</keyword>
<keyword id="KW-1185">Reference proteome</keyword>
<name>SYW_UREPA</name>
<evidence type="ECO:0000255" key="1">
    <source>
        <dbReference type="HAMAP-Rule" id="MF_00140"/>
    </source>
</evidence>
<feature type="chain" id="PRO_0000136704" description="Tryptophan--tRNA ligase">
    <location>
        <begin position="1"/>
        <end position="333"/>
    </location>
</feature>
<feature type="short sequence motif" description="'HIGH' region" evidence="1">
    <location>
        <begin position="10"/>
        <end position="18"/>
    </location>
</feature>
<feature type="short sequence motif" description="'KMSKS' region" evidence="1">
    <location>
        <begin position="200"/>
        <end position="204"/>
    </location>
</feature>
<feature type="binding site" evidence="1">
    <location>
        <begin position="9"/>
        <end position="11"/>
    </location>
    <ligand>
        <name>ATP</name>
        <dbReference type="ChEBI" id="CHEBI:30616"/>
    </ligand>
</feature>
<feature type="binding site" evidence="1">
    <location>
        <begin position="17"/>
        <end position="18"/>
    </location>
    <ligand>
        <name>ATP</name>
        <dbReference type="ChEBI" id="CHEBI:30616"/>
    </ligand>
</feature>
<feature type="binding site" evidence="1">
    <location>
        <position position="140"/>
    </location>
    <ligand>
        <name>L-tryptophan</name>
        <dbReference type="ChEBI" id="CHEBI:57912"/>
    </ligand>
</feature>
<feature type="binding site" evidence="1">
    <location>
        <begin position="152"/>
        <end position="154"/>
    </location>
    <ligand>
        <name>ATP</name>
        <dbReference type="ChEBI" id="CHEBI:30616"/>
    </ligand>
</feature>
<feature type="binding site" evidence="1">
    <location>
        <position position="191"/>
    </location>
    <ligand>
        <name>ATP</name>
        <dbReference type="ChEBI" id="CHEBI:30616"/>
    </ligand>
</feature>
<feature type="binding site" evidence="1">
    <location>
        <begin position="200"/>
        <end position="204"/>
    </location>
    <ligand>
        <name>ATP</name>
        <dbReference type="ChEBI" id="CHEBI:30616"/>
    </ligand>
</feature>
<comment type="function">
    <text evidence="1">Catalyzes the attachment of tryptophan to tRNA(Trp).</text>
</comment>
<comment type="catalytic activity">
    <reaction evidence="1">
        <text>tRNA(Trp) + L-tryptophan + ATP = L-tryptophyl-tRNA(Trp) + AMP + diphosphate + H(+)</text>
        <dbReference type="Rhea" id="RHEA:24080"/>
        <dbReference type="Rhea" id="RHEA-COMP:9671"/>
        <dbReference type="Rhea" id="RHEA-COMP:9705"/>
        <dbReference type="ChEBI" id="CHEBI:15378"/>
        <dbReference type="ChEBI" id="CHEBI:30616"/>
        <dbReference type="ChEBI" id="CHEBI:33019"/>
        <dbReference type="ChEBI" id="CHEBI:57912"/>
        <dbReference type="ChEBI" id="CHEBI:78442"/>
        <dbReference type="ChEBI" id="CHEBI:78535"/>
        <dbReference type="ChEBI" id="CHEBI:456215"/>
        <dbReference type="EC" id="6.1.1.2"/>
    </reaction>
</comment>
<comment type="subunit">
    <text evidence="1">Homodimer.</text>
</comment>
<comment type="subcellular location">
    <subcellularLocation>
        <location evidence="1">Cytoplasm</location>
    </subcellularLocation>
</comment>
<comment type="similarity">
    <text evidence="1">Belongs to the class-I aminoacyl-tRNA synthetase family.</text>
</comment>
<reference key="1">
    <citation type="journal article" date="2000" name="Nature">
        <title>The complete sequence of the mucosal pathogen Ureaplasma urealyticum.</title>
        <authorList>
            <person name="Glass J.I."/>
            <person name="Lefkowitz E.J."/>
            <person name="Glass J.S."/>
            <person name="Heiner C.R."/>
            <person name="Chen E.Y."/>
            <person name="Cassell G.H."/>
        </authorList>
    </citation>
    <scope>NUCLEOTIDE SEQUENCE [LARGE SCALE GENOMIC DNA]</scope>
    <source>
        <strain>ATCC 700970</strain>
    </source>
</reference>
<dbReference type="EC" id="6.1.1.2" evidence="1"/>
<dbReference type="EMBL" id="AF222894">
    <property type="protein sequence ID" value="AAF30582.1"/>
    <property type="molecule type" value="Genomic_DNA"/>
</dbReference>
<dbReference type="RefSeq" id="WP_006688883.1">
    <property type="nucleotide sequence ID" value="NC_002162.1"/>
</dbReference>
<dbReference type="SMR" id="Q9PQW8"/>
<dbReference type="STRING" id="273119.UU175"/>
<dbReference type="EnsemblBacteria" id="AAF30582">
    <property type="protein sequence ID" value="AAF30582"/>
    <property type="gene ID" value="UU175"/>
</dbReference>
<dbReference type="GeneID" id="29672759"/>
<dbReference type="KEGG" id="uur:UU175"/>
<dbReference type="eggNOG" id="COG0180">
    <property type="taxonomic scope" value="Bacteria"/>
</dbReference>
<dbReference type="HOGENOM" id="CLU_029244_1_1_14"/>
<dbReference type="OrthoDB" id="9801042at2"/>
<dbReference type="Proteomes" id="UP000000423">
    <property type="component" value="Chromosome"/>
</dbReference>
<dbReference type="GO" id="GO:0005829">
    <property type="term" value="C:cytosol"/>
    <property type="evidence" value="ECO:0007669"/>
    <property type="project" value="TreeGrafter"/>
</dbReference>
<dbReference type="GO" id="GO:0005524">
    <property type="term" value="F:ATP binding"/>
    <property type="evidence" value="ECO:0007669"/>
    <property type="project" value="UniProtKB-UniRule"/>
</dbReference>
<dbReference type="GO" id="GO:0004830">
    <property type="term" value="F:tryptophan-tRNA ligase activity"/>
    <property type="evidence" value="ECO:0007669"/>
    <property type="project" value="UniProtKB-UniRule"/>
</dbReference>
<dbReference type="GO" id="GO:0006436">
    <property type="term" value="P:tryptophanyl-tRNA aminoacylation"/>
    <property type="evidence" value="ECO:0007669"/>
    <property type="project" value="UniProtKB-UniRule"/>
</dbReference>
<dbReference type="CDD" id="cd00806">
    <property type="entry name" value="TrpRS_core"/>
    <property type="match status" value="1"/>
</dbReference>
<dbReference type="Gene3D" id="3.40.50.620">
    <property type="entry name" value="HUPs"/>
    <property type="match status" value="1"/>
</dbReference>
<dbReference type="Gene3D" id="1.10.240.10">
    <property type="entry name" value="Tyrosyl-Transfer RNA Synthetase"/>
    <property type="match status" value="1"/>
</dbReference>
<dbReference type="HAMAP" id="MF_00140_B">
    <property type="entry name" value="Trp_tRNA_synth_B"/>
    <property type="match status" value="1"/>
</dbReference>
<dbReference type="InterPro" id="IPR001412">
    <property type="entry name" value="aa-tRNA-synth_I_CS"/>
</dbReference>
<dbReference type="InterPro" id="IPR002305">
    <property type="entry name" value="aa-tRNA-synth_Ic"/>
</dbReference>
<dbReference type="InterPro" id="IPR014729">
    <property type="entry name" value="Rossmann-like_a/b/a_fold"/>
</dbReference>
<dbReference type="InterPro" id="IPR002306">
    <property type="entry name" value="Trp-tRNA-ligase"/>
</dbReference>
<dbReference type="InterPro" id="IPR024109">
    <property type="entry name" value="Trp-tRNA-ligase_bac-type"/>
</dbReference>
<dbReference type="InterPro" id="IPR050203">
    <property type="entry name" value="Trp-tRNA_synthetase"/>
</dbReference>
<dbReference type="NCBIfam" id="TIGR00233">
    <property type="entry name" value="trpS"/>
    <property type="match status" value="1"/>
</dbReference>
<dbReference type="PANTHER" id="PTHR43766">
    <property type="entry name" value="TRYPTOPHAN--TRNA LIGASE, MITOCHONDRIAL"/>
    <property type="match status" value="1"/>
</dbReference>
<dbReference type="PANTHER" id="PTHR43766:SF1">
    <property type="entry name" value="TRYPTOPHAN--TRNA LIGASE, MITOCHONDRIAL"/>
    <property type="match status" value="1"/>
</dbReference>
<dbReference type="Pfam" id="PF00579">
    <property type="entry name" value="tRNA-synt_1b"/>
    <property type="match status" value="1"/>
</dbReference>
<dbReference type="PRINTS" id="PR01039">
    <property type="entry name" value="TRNASYNTHTRP"/>
</dbReference>
<dbReference type="SUPFAM" id="SSF52374">
    <property type="entry name" value="Nucleotidylyl transferase"/>
    <property type="match status" value="1"/>
</dbReference>
<dbReference type="PROSITE" id="PS00178">
    <property type="entry name" value="AA_TRNA_LIGASE_I"/>
    <property type="match status" value="1"/>
</dbReference>
<sequence>MKRLISGIQPTNNLTLGNYLGAIKNFVDLQDDYEVFLFVADLHSLTPNIFDNTDFSTTKRQIIATYLAAGIDPKKTCLFYQSDILSIPLLAHILLCSTSIGELTRMTQFKDKSIKATKMANNTEMIPSGLLTYPTLMAADILTFNADVVPVGQDQKQHLELTRTLADRFNKRYGNTFKLPQVYIPKIGAKIMDLLDPNIKMSKSSKNLKGVIFLNDSKDIIFKKIKGALTDNLNKVKYDLTLQPGVSNLMTIYACLTNLSFKEIELKYQQQNYGVFKNDLANIVADFLEKLQQKISYWLNSPELDIMIDNSCERANDIAYQNVQLVLKHMQLK</sequence>
<organism>
    <name type="scientific">Ureaplasma parvum serovar 3 (strain ATCC 700970)</name>
    <dbReference type="NCBI Taxonomy" id="273119"/>
    <lineage>
        <taxon>Bacteria</taxon>
        <taxon>Bacillati</taxon>
        <taxon>Mycoplasmatota</taxon>
        <taxon>Mycoplasmoidales</taxon>
        <taxon>Mycoplasmoidaceae</taxon>
        <taxon>Ureaplasma</taxon>
    </lineage>
</organism>
<accession>Q9PQW8</accession>